<dbReference type="EMBL" id="Z25438">
    <property type="protein sequence ID" value="CAA80925.1"/>
    <property type="molecule type" value="mRNA"/>
</dbReference>
<dbReference type="EMBL" id="DS496137">
    <property type="protein sequence ID" value="EDP00897.1"/>
    <property type="status" value="ALT_SEQ"/>
    <property type="molecule type" value="Genomic_DNA"/>
</dbReference>
<dbReference type="PIR" id="S40142">
    <property type="entry name" value="S40142"/>
</dbReference>
<dbReference type="SMR" id="Q39608"/>
<dbReference type="IntAct" id="Q39608">
    <property type="interactions" value="1"/>
</dbReference>
<dbReference type="TCDB" id="2.A.1.8.6">
    <property type="family name" value="the major facilitator superfamily (mfs)"/>
</dbReference>
<dbReference type="PaxDb" id="3055-EDP00897"/>
<dbReference type="KEGG" id="cre:CHLRE_09g410850v5"/>
<dbReference type="eggNOG" id="ENOG502QPIC">
    <property type="taxonomic scope" value="Eukaryota"/>
</dbReference>
<dbReference type="GO" id="GO:0005886">
    <property type="term" value="C:plasma membrane"/>
    <property type="evidence" value="ECO:0007669"/>
    <property type="project" value="UniProtKB-SubCell"/>
</dbReference>
<dbReference type="GO" id="GO:1990351">
    <property type="term" value="C:transporter complex"/>
    <property type="evidence" value="ECO:0000315"/>
    <property type="project" value="UniProtKB"/>
</dbReference>
<dbReference type="GO" id="GO:0015112">
    <property type="term" value="F:nitrate transmembrane transporter activity"/>
    <property type="evidence" value="ECO:0007669"/>
    <property type="project" value="InterPro"/>
</dbReference>
<dbReference type="GO" id="GO:0015113">
    <property type="term" value="F:nitrite transmembrane transporter activity"/>
    <property type="evidence" value="ECO:0007669"/>
    <property type="project" value="InterPro"/>
</dbReference>
<dbReference type="GO" id="GO:0042128">
    <property type="term" value="P:nitrate assimilation"/>
    <property type="evidence" value="ECO:0007669"/>
    <property type="project" value="UniProtKB-KW"/>
</dbReference>
<dbReference type="GO" id="GO:0015706">
    <property type="term" value="P:nitrate transmembrane transport"/>
    <property type="evidence" value="ECO:0000314"/>
    <property type="project" value="UniProtKB"/>
</dbReference>
<dbReference type="GO" id="GO:0015707">
    <property type="term" value="P:nitrite transport"/>
    <property type="evidence" value="ECO:0000314"/>
    <property type="project" value="UniProtKB"/>
</dbReference>
<dbReference type="CDD" id="cd17341">
    <property type="entry name" value="MFS_NRT2_like"/>
    <property type="match status" value="1"/>
</dbReference>
<dbReference type="FunFam" id="1.20.1250.20:FF:000053">
    <property type="entry name" value="Nitrate transporter 2.1"/>
    <property type="match status" value="1"/>
</dbReference>
<dbReference type="Gene3D" id="1.20.1250.20">
    <property type="entry name" value="MFS general substrate transporter like domains"/>
    <property type="match status" value="2"/>
</dbReference>
<dbReference type="InterPro" id="IPR011701">
    <property type="entry name" value="MFS"/>
</dbReference>
<dbReference type="InterPro" id="IPR036259">
    <property type="entry name" value="MFS_trans_sf"/>
</dbReference>
<dbReference type="InterPro" id="IPR044772">
    <property type="entry name" value="NO3_transporter"/>
</dbReference>
<dbReference type="InterPro" id="IPR004737">
    <property type="entry name" value="NO3_transporter_NarK/NarU-like"/>
</dbReference>
<dbReference type="NCBIfam" id="TIGR00886">
    <property type="entry name" value="2A0108"/>
    <property type="match status" value="1"/>
</dbReference>
<dbReference type="PANTHER" id="PTHR23515">
    <property type="entry name" value="HIGH-AFFINITY NITRATE TRANSPORTER 2.3"/>
    <property type="match status" value="1"/>
</dbReference>
<dbReference type="Pfam" id="PF07690">
    <property type="entry name" value="MFS_1"/>
    <property type="match status" value="1"/>
</dbReference>
<dbReference type="SUPFAM" id="SSF103473">
    <property type="entry name" value="MFS general substrate transporter"/>
    <property type="match status" value="1"/>
</dbReference>
<feature type="chain" id="PRO_0000438980" description="Nitrate transporter 2.1">
    <location>
        <begin position="1"/>
        <end position="547"/>
    </location>
</feature>
<feature type="transmembrane region" description="Helical" evidence="1">
    <location>
        <begin position="53"/>
        <end position="73"/>
    </location>
</feature>
<feature type="transmembrane region" description="Helical" evidence="1">
    <location>
        <begin position="86"/>
        <end position="106"/>
    </location>
</feature>
<feature type="transmembrane region" description="Helical" evidence="1">
    <location>
        <begin position="113"/>
        <end position="133"/>
    </location>
</feature>
<feature type="transmembrane region" description="Helical" evidence="1">
    <location>
        <begin position="143"/>
        <end position="163"/>
    </location>
</feature>
<feature type="transmembrane region" description="Helical" evidence="1">
    <location>
        <begin position="173"/>
        <end position="193"/>
    </location>
</feature>
<feature type="transmembrane region" description="Helical" evidence="1">
    <location>
        <begin position="211"/>
        <end position="231"/>
    </location>
</feature>
<feature type="transmembrane region" description="Helical" evidence="1">
    <location>
        <begin position="262"/>
        <end position="280"/>
    </location>
</feature>
<feature type="transmembrane region" description="Helical" evidence="1">
    <location>
        <begin position="296"/>
        <end position="316"/>
    </location>
</feature>
<feature type="transmembrane region" description="Helical" evidence="1">
    <location>
        <begin position="338"/>
        <end position="358"/>
    </location>
</feature>
<feature type="transmembrane region" description="Helical" evidence="1">
    <location>
        <begin position="366"/>
        <end position="386"/>
    </location>
</feature>
<feature type="transmembrane region" description="Helical" evidence="1">
    <location>
        <begin position="400"/>
        <end position="420"/>
    </location>
</feature>
<feature type="transmembrane region" description="Helical" evidence="1">
    <location>
        <begin position="433"/>
        <end position="453"/>
    </location>
</feature>
<sequence>MAEKPATVNAELVKEMDAAPKKYPYSLDSEGKANYCPVWRFTQPHMMAFHLSWICFFMSFVATFAPASLAPIIRDDLFLTKSQLGNAGVAAVCGAIAARIFMGIVVDSIGPRYGAAATMLMTAPAVFCMALVTDFSTFACVRFFIGLSLCMFVCCQFWCGTMFNVKIVGTANAIAAGWGNMGGGACHFIMPLIYQGIKDGGVPGYQAWRWAFFVPGGIYILTATLTLLLGIDHPSGKDYRDLKKEGTLKAKGAMWPVVKCGLGNYRSWILALTYGYSFGVELTVDNVIVEYLFDQFGLNLAVAGALGAIFGLMNLFTRATGGMISDLVAKPFGMRGRIWALWIIQTLGGIFCIVLGKVSNSLSSTIVIMIVFSIFCQQACGLHFGITPFVSRRAYGVVSGLVGAGGNTGAAITQAIWFAGTAPWQLTLSKADGFVYMGIMTIGLTLPLFFIWFPMWGSMLTGPREGAEEEDYYMREWSAEEVASGLHQGSMRFAMESKSQRGTRDKRAAGPARVPQQLRLGARCCQARGGLIRCVLAQSLGATGCSD</sequence>
<comment type="function">
    <text evidence="2 4 5">Involved in nitrate transport, but does not seem to be able to mediate transport by its own (PubMed:8180624). Acts as a dual component transporter with NAR2 (system 1) (PubMed:10682832, PubMed:8180624). Imports nitrate with high affinity when expressed with NAR2 in a heterologous system (Xenopus oocytes) (PubMed:10682832). Involved in a high affinity and a high capacity transport specific for both nitrate and nitrite (PubMed:8567664).</text>
</comment>
<comment type="activity regulation">
    <text evidence="5">Nitrite transport mediated by system 1 is very sensitive to inhibition by nitrate.</text>
</comment>
<comment type="subcellular location">
    <subcellularLocation>
        <location evidence="9">Cell membrane</location>
        <topology evidence="1">Multi-pass membrane protein</topology>
    </subcellularLocation>
</comment>
<comment type="induction">
    <text evidence="3 6">Up-regulated by nitrate (PubMed:8111016, PubMed:9648741). Up-regulated by nitrite (PubMed:9648741).</text>
</comment>
<comment type="similarity">
    <text evidence="9">Belongs to the major facilitator superfamily. Nitrate/nitrite porter (TC 2.A.1.8) family.</text>
</comment>
<comment type="sequence caution" evidence="9">
    <conflict type="erroneous gene model prediction">
        <sequence resource="EMBL-CDS" id="EDP00897"/>
    </conflict>
</comment>
<proteinExistence type="evidence at transcript level"/>
<evidence type="ECO:0000255" key="1"/>
<evidence type="ECO:0000269" key="2">
    <source>
    </source>
</evidence>
<evidence type="ECO:0000269" key="3">
    <source>
    </source>
</evidence>
<evidence type="ECO:0000269" key="4">
    <source>
    </source>
</evidence>
<evidence type="ECO:0000269" key="5">
    <source>
    </source>
</evidence>
<evidence type="ECO:0000269" key="6">
    <source>
    </source>
</evidence>
<evidence type="ECO:0000303" key="7">
    <source>
    </source>
</evidence>
<evidence type="ECO:0000303" key="8">
    <source>
    </source>
</evidence>
<evidence type="ECO:0000305" key="9"/>
<evidence type="ECO:0000312" key="10">
    <source>
        <dbReference type="EMBL" id="CAA80925.1"/>
    </source>
</evidence>
<evidence type="ECO:0000312" key="11">
    <source>
        <dbReference type="EMBL" id="EDP00897.1"/>
    </source>
</evidence>
<keyword id="KW-1003">Cell membrane</keyword>
<keyword id="KW-0472">Membrane</keyword>
<keyword id="KW-0534">Nitrate assimilation</keyword>
<keyword id="KW-0812">Transmembrane</keyword>
<keyword id="KW-1133">Transmembrane helix</keyword>
<keyword id="KW-0813">Transport</keyword>
<gene>
    <name evidence="8" type="primary">NRT2.1</name>
    <name evidence="7" type="synonym">NAR-3</name>
    <name evidence="8" type="synonym">NAR3</name>
    <name evidence="11" type="ORF">CHLREDRAFT_192090</name>
</gene>
<organism evidence="10">
    <name type="scientific">Chlamydomonas reinhardtii</name>
    <name type="common">Chlamydomonas smithii</name>
    <dbReference type="NCBI Taxonomy" id="3055"/>
    <lineage>
        <taxon>Eukaryota</taxon>
        <taxon>Viridiplantae</taxon>
        <taxon>Chlorophyta</taxon>
        <taxon>core chlorophytes</taxon>
        <taxon>Chlorophyceae</taxon>
        <taxon>CS clade</taxon>
        <taxon>Chlamydomonadales</taxon>
        <taxon>Chlamydomonadaceae</taxon>
        <taxon>Chlamydomonas</taxon>
    </lineage>
</organism>
<name>NRT21_CHLRE</name>
<protein>
    <recommendedName>
        <fullName evidence="8">Nitrate transporter 2.1</fullName>
    </recommendedName>
    <alternativeName>
        <fullName evidence="7">Nitrate assimilation related protein 3</fullName>
    </alternativeName>
</protein>
<reference key="1">
    <citation type="journal article" date="1994" name="Plant J.">
        <title>Identification of nitrate transporter genes in Chlamydomonas reinhardtii.</title>
        <authorList>
            <person name="Quesada A."/>
            <person name="Galvan A."/>
            <person name="Fernandez E."/>
        </authorList>
    </citation>
    <scope>NUCLEOTIDE SEQUENCE [MRNA]</scope>
    <scope>FUNCTION</scope>
    <source>
        <strain>21gr / CC-1690</strain>
    </source>
</reference>
<reference key="2">
    <citation type="journal article" date="2007" name="Science">
        <title>The Chlamydomonas genome reveals the evolution of key animal and plant functions.</title>
        <authorList>
            <person name="Merchant S.S."/>
            <person name="Prochnik S.E."/>
            <person name="Vallon O."/>
            <person name="Harris E.H."/>
            <person name="Karpowicz S.J."/>
            <person name="Witman G.B."/>
            <person name="Terry A."/>
            <person name="Salamov A."/>
            <person name="Fritz-Laylin L.K."/>
            <person name="Marechal-Drouard L."/>
            <person name="Marshall W.F."/>
            <person name="Qu L.H."/>
            <person name="Nelson D.R."/>
            <person name="Sanderfoot A.A."/>
            <person name="Spalding M.H."/>
            <person name="Kapitonov V.V."/>
            <person name="Ren Q."/>
            <person name="Ferris P."/>
            <person name="Lindquist E."/>
            <person name="Shapiro H."/>
            <person name="Lucas S.M."/>
            <person name="Grimwood J."/>
            <person name="Schmutz J."/>
            <person name="Cardol P."/>
            <person name="Cerutti H."/>
            <person name="Chanfreau G."/>
            <person name="Chen C.L."/>
            <person name="Cognat V."/>
            <person name="Croft M.T."/>
            <person name="Dent R."/>
            <person name="Dutcher S."/>
            <person name="Fernandez E."/>
            <person name="Fukuzawa H."/>
            <person name="Gonzalez-Ballester D."/>
            <person name="Gonzalez-Halphen D."/>
            <person name="Hallmann A."/>
            <person name="Hanikenne M."/>
            <person name="Hippler M."/>
            <person name="Inwood W."/>
            <person name="Jabbari K."/>
            <person name="Kalanon M."/>
            <person name="Kuras R."/>
            <person name="Lefebvre P.A."/>
            <person name="Lemaire S.D."/>
            <person name="Lobanov A.V."/>
            <person name="Lohr M."/>
            <person name="Manuell A."/>
            <person name="Meier I."/>
            <person name="Mets L."/>
            <person name="Mittag M."/>
            <person name="Mittelmeier T."/>
            <person name="Moroney J.V."/>
            <person name="Moseley J."/>
            <person name="Napoli C."/>
            <person name="Nedelcu A.M."/>
            <person name="Niyogi K."/>
            <person name="Novoselov S.V."/>
            <person name="Paulsen I.T."/>
            <person name="Pazour G.J."/>
            <person name="Purton S."/>
            <person name="Ral J.P."/>
            <person name="Riano-Pachon D.M."/>
            <person name="Riekhof W."/>
            <person name="Rymarquis L."/>
            <person name="Schroda M."/>
            <person name="Stern D."/>
            <person name="Umen J."/>
            <person name="Willows R."/>
            <person name="Wilson N."/>
            <person name="Zimmer S.L."/>
            <person name="Allmer J."/>
            <person name="Balk J."/>
            <person name="Bisova K."/>
            <person name="Chen C.J."/>
            <person name="Elias M."/>
            <person name="Gendler K."/>
            <person name="Hauser C."/>
            <person name="Lamb M.R."/>
            <person name="Ledford H."/>
            <person name="Long J.C."/>
            <person name="Minagawa J."/>
            <person name="Page M.D."/>
            <person name="Pan J."/>
            <person name="Pootakham W."/>
            <person name="Roje S."/>
            <person name="Rose A."/>
            <person name="Stahlberg E."/>
            <person name="Terauchi A.M."/>
            <person name="Yang P."/>
            <person name="Ball S."/>
            <person name="Bowler C."/>
            <person name="Dieckmann C.L."/>
            <person name="Gladyshev V.N."/>
            <person name="Green P."/>
            <person name="Jorgensen R."/>
            <person name="Mayfield S."/>
            <person name="Mueller-Roeber B."/>
            <person name="Rajamani S."/>
            <person name="Sayre R.T."/>
            <person name="Brokstein P."/>
            <person name="Dubchak I."/>
            <person name="Goodstein D."/>
            <person name="Hornick L."/>
            <person name="Huang Y.W."/>
            <person name="Jhaveri J."/>
            <person name="Luo Y."/>
            <person name="Martinez D."/>
            <person name="Ngau W.C."/>
            <person name="Otillar B."/>
            <person name="Poliakov A."/>
            <person name="Porter A."/>
            <person name="Szajkowski L."/>
            <person name="Werner G."/>
            <person name="Zhou K."/>
            <person name="Grigoriev I.V."/>
            <person name="Rokhsar D.S."/>
            <person name="Grossman A.R."/>
        </authorList>
    </citation>
    <scope>NUCLEOTIDE SEQUENCE [LARGE SCALE GENOMIC DNA]</scope>
    <source>
        <strain>CC-503</strain>
    </source>
</reference>
<reference key="3">
    <citation type="journal article" date="1994" name="Plant Mol. Biol.">
        <title>Expression of nitrate assimilation related genes in Chlamydomonas reinhardtii.</title>
        <authorList>
            <person name="Quesada A."/>
            <person name="Fernandez E."/>
        </authorList>
    </citation>
    <scope>INDUCTION BY NITRATE</scope>
</reference>
<reference key="4">
    <citation type="journal article" date="1996" name="J. Biol. Chem.">
        <title>Nitrate and nitrite are transported by different specific transport systems and by a bispecific transporter in Chlamydomonas reinhardtii.</title>
        <authorList>
            <person name="Galvan A."/>
            <person name="Quesada A."/>
            <person name="Fernandez E."/>
        </authorList>
    </citation>
    <scope>FUNCTION</scope>
    <scope>ACTIVITY REGULATION</scope>
</reference>
<reference key="5">
    <citation type="journal article" date="1998" name="Mol. Gen. Genet.">
        <title>Three Nrt2 genes are differentially regulated in Chlamydomonas reinhardtii.</title>
        <authorList>
            <person name="Quesada A."/>
            <person name="Hidalgo J."/>
            <person name="Fernandez E."/>
        </authorList>
    </citation>
    <scope>INDUCTION BY NITRATE AND NITRITE</scope>
</reference>
<reference key="6">
    <citation type="journal article" date="2000" name="FEBS Lett.">
        <title>A high affinity nitrate transport system from Chlamydomonas requires two gene products.</title>
        <authorList>
            <person name="Zhou J.J."/>
            <person name="Fernandez E."/>
            <person name="Galvan A."/>
            <person name="Miller A.J."/>
        </authorList>
    </citation>
    <scope>FUNCTION</scope>
</reference>
<accession>Q39608</accession>
<accession>A8J4P5</accession>